<proteinExistence type="evidence at protein level"/>
<organism>
    <name type="scientific">Mus musculus</name>
    <name type="common">Mouse</name>
    <dbReference type="NCBI Taxonomy" id="10090"/>
    <lineage>
        <taxon>Eukaryota</taxon>
        <taxon>Metazoa</taxon>
        <taxon>Chordata</taxon>
        <taxon>Craniata</taxon>
        <taxon>Vertebrata</taxon>
        <taxon>Euteleostomi</taxon>
        <taxon>Mammalia</taxon>
        <taxon>Eutheria</taxon>
        <taxon>Euarchontoglires</taxon>
        <taxon>Glires</taxon>
        <taxon>Rodentia</taxon>
        <taxon>Myomorpha</taxon>
        <taxon>Muroidea</taxon>
        <taxon>Muridae</taxon>
        <taxon>Murinae</taxon>
        <taxon>Mus</taxon>
        <taxon>Mus</taxon>
    </lineage>
</organism>
<evidence type="ECO:0000255" key="1"/>
<evidence type="ECO:0000269" key="2">
    <source>
    </source>
</evidence>
<evidence type="ECO:0000305" key="3"/>
<sequence length="412" mass="43165">MHGKLLPLAGLYLVQGLPYGLQSSLLPILLRARGLSLTRVGLTKGLYAPWLLKLAWAPLVDRRGTPRVWLTLSTLSLGLVCGLLAVLPPPQAGQTGLPTTVMGLLLLLNLGAAVQDVALDTLAVQLLEPKELGPGNTVQVVAYKLGSALAGGGLLVLFPTLSWPLLFLLLAATYWLAAALAWAAPALGRLPWPQASEHTPHSSYLLQDLLAVPGTLWTAGFVLTYKLGEQGAGSLFPLLLLDHGASASDLGLWSGLGAVTCSIAGSSLGGALLARHWQPLKLLKTVLQLRLGSLACQTALLFHLNSPGASVDPGTVMRGAVLLSLCLQQFFGGVVTTATFTVMMHCSQLAPRALQATHYSFLATLELLGKLLLGTLAGVLADSLGPHLCFAVFLVLSALPVLDLRLAPSNLT</sequence>
<name>MFSD3_MOUSE</name>
<dbReference type="EMBL" id="AK009269">
    <property type="protein sequence ID" value="BAB26184.1"/>
    <property type="molecule type" value="mRNA"/>
</dbReference>
<dbReference type="EMBL" id="AK089539">
    <property type="protein sequence ID" value="BAC40919.1"/>
    <property type="molecule type" value="mRNA"/>
</dbReference>
<dbReference type="EMBL" id="BC019171">
    <property type="protein sequence ID" value="AAH19171.1"/>
    <property type="molecule type" value="mRNA"/>
</dbReference>
<dbReference type="EMBL" id="BC085305">
    <property type="protein sequence ID" value="AAH85305.1"/>
    <property type="molecule type" value="mRNA"/>
</dbReference>
<dbReference type="CCDS" id="CCDS27587.1"/>
<dbReference type="RefSeq" id="NP_081398.2">
    <property type="nucleotide sequence ID" value="NM_027122.3"/>
</dbReference>
<dbReference type="SMR" id="Q5U419"/>
<dbReference type="FunCoup" id="Q5U419">
    <property type="interactions" value="13"/>
</dbReference>
<dbReference type="STRING" id="10090.ENSMUSP00000019224"/>
<dbReference type="PhosphoSitePlus" id="Q5U419"/>
<dbReference type="PaxDb" id="10090-ENSMUSP00000019224"/>
<dbReference type="ProteomicsDB" id="293465"/>
<dbReference type="DNASU" id="69572"/>
<dbReference type="GeneID" id="69572"/>
<dbReference type="KEGG" id="mmu:69572"/>
<dbReference type="UCSC" id="uc007wlt.1">
    <property type="organism name" value="mouse"/>
</dbReference>
<dbReference type="AGR" id="MGI:1916822"/>
<dbReference type="CTD" id="113655"/>
<dbReference type="MGI" id="MGI:1916822">
    <property type="gene designation" value="Mfsd3"/>
</dbReference>
<dbReference type="eggNOG" id="KOG3574">
    <property type="taxonomic scope" value="Eukaryota"/>
</dbReference>
<dbReference type="InParanoid" id="Q5U419"/>
<dbReference type="OrthoDB" id="6415790at2759"/>
<dbReference type="PhylomeDB" id="Q5U419"/>
<dbReference type="TreeFam" id="TF330933"/>
<dbReference type="BioGRID-ORCS" id="69572">
    <property type="hits" value="2 hits in 80 CRISPR screens"/>
</dbReference>
<dbReference type="PRO" id="PR:Q5U419"/>
<dbReference type="Proteomes" id="UP000000589">
    <property type="component" value="Unplaced"/>
</dbReference>
<dbReference type="RNAct" id="Q5U419">
    <property type="molecule type" value="protein"/>
</dbReference>
<dbReference type="GO" id="GO:0016020">
    <property type="term" value="C:membrane"/>
    <property type="evidence" value="ECO:0007669"/>
    <property type="project" value="UniProtKB-SubCell"/>
</dbReference>
<dbReference type="GO" id="GO:0022857">
    <property type="term" value="F:transmembrane transporter activity"/>
    <property type="evidence" value="ECO:0007669"/>
    <property type="project" value="InterPro"/>
</dbReference>
<dbReference type="CDD" id="cd17485">
    <property type="entry name" value="MFS_MFSD3"/>
    <property type="match status" value="1"/>
</dbReference>
<dbReference type="FunFam" id="1.20.1250.20:FF:000176">
    <property type="entry name" value="Major facilitator superfamily domain containing 3"/>
    <property type="match status" value="1"/>
</dbReference>
<dbReference type="Gene3D" id="1.20.1250.20">
    <property type="entry name" value="MFS general substrate transporter like domains"/>
    <property type="match status" value="1"/>
</dbReference>
<dbReference type="InterPro" id="IPR004752">
    <property type="entry name" value="AmpG_permease/AT-1"/>
</dbReference>
<dbReference type="InterPro" id="IPR011701">
    <property type="entry name" value="MFS"/>
</dbReference>
<dbReference type="InterPro" id="IPR036259">
    <property type="entry name" value="MFS_trans_sf"/>
</dbReference>
<dbReference type="PANTHER" id="PTHR12778:SF10">
    <property type="entry name" value="MAJOR FACILITATOR SUPERFAMILY DOMAIN-CONTAINING PROTEIN 3"/>
    <property type="match status" value="1"/>
</dbReference>
<dbReference type="PANTHER" id="PTHR12778">
    <property type="entry name" value="SOLUTE CARRIER FAMILY 33 ACETYL-COA TRANSPORTER -RELATED"/>
    <property type="match status" value="1"/>
</dbReference>
<dbReference type="Pfam" id="PF07690">
    <property type="entry name" value="MFS_1"/>
    <property type="match status" value="1"/>
</dbReference>
<dbReference type="SUPFAM" id="SSF103473">
    <property type="entry name" value="MFS general substrate transporter"/>
    <property type="match status" value="1"/>
</dbReference>
<protein>
    <recommendedName>
        <fullName>Major facilitator superfamily domain-containing protein 3</fullName>
    </recommendedName>
</protein>
<accession>Q5U419</accession>
<accession>Q8VED1</accession>
<accession>Q9D7F8</accession>
<feature type="chain" id="PRO_0000273393" description="Major facilitator superfamily domain-containing protein 3">
    <location>
        <begin position="1"/>
        <end position="412"/>
    </location>
</feature>
<feature type="transmembrane region" description="Helical" evidence="1">
    <location>
        <begin position="10"/>
        <end position="30"/>
    </location>
</feature>
<feature type="transmembrane region" description="Helical" evidence="1">
    <location>
        <begin position="40"/>
        <end position="60"/>
    </location>
</feature>
<feature type="transmembrane region" description="Helical" evidence="1">
    <location>
        <begin position="68"/>
        <end position="88"/>
    </location>
</feature>
<feature type="transmembrane region" description="Helical" evidence="1">
    <location>
        <begin position="99"/>
        <end position="119"/>
    </location>
</feature>
<feature type="transmembrane region" description="Helical" evidence="1">
    <location>
        <begin position="152"/>
        <end position="172"/>
    </location>
</feature>
<feature type="transmembrane region" description="Helical" evidence="1">
    <location>
        <begin position="173"/>
        <end position="193"/>
    </location>
</feature>
<feature type="transmembrane region" description="Helical" evidence="1">
    <location>
        <begin position="204"/>
        <end position="224"/>
    </location>
</feature>
<feature type="transmembrane region" description="Helical" evidence="1">
    <location>
        <begin position="252"/>
        <end position="272"/>
    </location>
</feature>
<feature type="transmembrane region" description="Helical" evidence="1">
    <location>
        <begin position="291"/>
        <end position="311"/>
    </location>
</feature>
<feature type="transmembrane region" description="Helical" evidence="1">
    <location>
        <begin position="320"/>
        <end position="340"/>
    </location>
</feature>
<feature type="transmembrane region" description="Helical" evidence="1">
    <location>
        <begin position="361"/>
        <end position="381"/>
    </location>
</feature>
<feature type="transmembrane region" description="Helical" evidence="1">
    <location>
        <begin position="384"/>
        <end position="404"/>
    </location>
</feature>
<feature type="sequence conflict" description="In Ref. 1; BAB26184." evidence="3" ref="1">
    <original>R</original>
    <variation>K</variation>
    <location>
        <position position="189"/>
    </location>
</feature>
<feature type="sequence conflict" description="In Ref. 1; BAB26184." evidence="3" ref="1">
    <original>E</original>
    <variation>K</variation>
    <location>
        <position position="197"/>
    </location>
</feature>
<feature type="sequence conflict" description="In Ref. 1; BAB26184." evidence="3" ref="1">
    <original>G</original>
    <variation>A</variation>
    <location>
        <position position="233"/>
    </location>
</feature>
<feature type="sequence conflict" description="In Ref. 1; BAB26184." evidence="3" ref="1">
    <original>L</original>
    <variation>W</variation>
    <location>
        <position position="240"/>
    </location>
</feature>
<feature type="sequence conflict" description="In Ref. 1; BAB26184." evidence="3" ref="1">
    <original>A</original>
    <variation>V</variation>
    <location>
        <position position="245"/>
    </location>
</feature>
<feature type="sequence conflict" description="In Ref. 1; BAB26184." evidence="3" ref="1">
    <original>L</original>
    <variation>I</variation>
    <location>
        <position position="252"/>
    </location>
</feature>
<feature type="sequence conflict" description="In Ref. 1; BAB26184/BAC40919 and 2; AAH19171." evidence="3" ref="1 2">
    <original>L</original>
    <variation>P</variation>
    <location>
        <position position="373"/>
    </location>
</feature>
<gene>
    <name type="primary">Mfsd3</name>
</gene>
<comment type="subcellular location">
    <subcellularLocation>
        <location evidence="3">Membrane</location>
        <topology evidence="3">Multi-pass membrane protein</topology>
    </subcellularLocation>
</comment>
<comment type="tissue specificity">
    <text evidence="2">In brain, expressed in the cortex, striatum, hippocampus, hypothalamus, thalamus and cerebellum (at protein level) (PubMed:27981419). Widely expressed with highest levels in kidney and liver (PubMed:27981419).</text>
</comment>
<comment type="induction">
    <text evidence="2">After 24 hours of starvation, up-regulated in the brainstem and cerebellum and down-regulated in the hypothalamus (PubMed:27981419). Following 8 weeks of high-fat diet, down-regulated in the brainstem (PubMed:27981419).</text>
</comment>
<comment type="similarity">
    <text evidence="3">Belongs to the major facilitator superfamily.</text>
</comment>
<keyword id="KW-0472">Membrane</keyword>
<keyword id="KW-1185">Reference proteome</keyword>
<keyword id="KW-0812">Transmembrane</keyword>
<keyword id="KW-1133">Transmembrane helix</keyword>
<keyword id="KW-0813">Transport</keyword>
<reference key="1">
    <citation type="journal article" date="2005" name="Science">
        <title>The transcriptional landscape of the mammalian genome.</title>
        <authorList>
            <person name="Carninci P."/>
            <person name="Kasukawa T."/>
            <person name="Katayama S."/>
            <person name="Gough J."/>
            <person name="Frith M.C."/>
            <person name="Maeda N."/>
            <person name="Oyama R."/>
            <person name="Ravasi T."/>
            <person name="Lenhard B."/>
            <person name="Wells C."/>
            <person name="Kodzius R."/>
            <person name="Shimokawa K."/>
            <person name="Bajic V.B."/>
            <person name="Brenner S.E."/>
            <person name="Batalov S."/>
            <person name="Forrest A.R."/>
            <person name="Zavolan M."/>
            <person name="Davis M.J."/>
            <person name="Wilming L.G."/>
            <person name="Aidinis V."/>
            <person name="Allen J.E."/>
            <person name="Ambesi-Impiombato A."/>
            <person name="Apweiler R."/>
            <person name="Aturaliya R.N."/>
            <person name="Bailey T.L."/>
            <person name="Bansal M."/>
            <person name="Baxter L."/>
            <person name="Beisel K.W."/>
            <person name="Bersano T."/>
            <person name="Bono H."/>
            <person name="Chalk A.M."/>
            <person name="Chiu K.P."/>
            <person name="Choudhary V."/>
            <person name="Christoffels A."/>
            <person name="Clutterbuck D.R."/>
            <person name="Crowe M.L."/>
            <person name="Dalla E."/>
            <person name="Dalrymple B.P."/>
            <person name="de Bono B."/>
            <person name="Della Gatta G."/>
            <person name="di Bernardo D."/>
            <person name="Down T."/>
            <person name="Engstrom P."/>
            <person name="Fagiolini M."/>
            <person name="Faulkner G."/>
            <person name="Fletcher C.F."/>
            <person name="Fukushima T."/>
            <person name="Furuno M."/>
            <person name="Futaki S."/>
            <person name="Gariboldi M."/>
            <person name="Georgii-Hemming P."/>
            <person name="Gingeras T.R."/>
            <person name="Gojobori T."/>
            <person name="Green R.E."/>
            <person name="Gustincich S."/>
            <person name="Harbers M."/>
            <person name="Hayashi Y."/>
            <person name="Hensch T.K."/>
            <person name="Hirokawa N."/>
            <person name="Hill D."/>
            <person name="Huminiecki L."/>
            <person name="Iacono M."/>
            <person name="Ikeo K."/>
            <person name="Iwama A."/>
            <person name="Ishikawa T."/>
            <person name="Jakt M."/>
            <person name="Kanapin A."/>
            <person name="Katoh M."/>
            <person name="Kawasawa Y."/>
            <person name="Kelso J."/>
            <person name="Kitamura H."/>
            <person name="Kitano H."/>
            <person name="Kollias G."/>
            <person name="Krishnan S.P."/>
            <person name="Kruger A."/>
            <person name="Kummerfeld S.K."/>
            <person name="Kurochkin I.V."/>
            <person name="Lareau L.F."/>
            <person name="Lazarevic D."/>
            <person name="Lipovich L."/>
            <person name="Liu J."/>
            <person name="Liuni S."/>
            <person name="McWilliam S."/>
            <person name="Madan Babu M."/>
            <person name="Madera M."/>
            <person name="Marchionni L."/>
            <person name="Matsuda H."/>
            <person name="Matsuzawa S."/>
            <person name="Miki H."/>
            <person name="Mignone F."/>
            <person name="Miyake S."/>
            <person name="Morris K."/>
            <person name="Mottagui-Tabar S."/>
            <person name="Mulder N."/>
            <person name="Nakano N."/>
            <person name="Nakauchi H."/>
            <person name="Ng P."/>
            <person name="Nilsson R."/>
            <person name="Nishiguchi S."/>
            <person name="Nishikawa S."/>
            <person name="Nori F."/>
            <person name="Ohara O."/>
            <person name="Okazaki Y."/>
            <person name="Orlando V."/>
            <person name="Pang K.C."/>
            <person name="Pavan W.J."/>
            <person name="Pavesi G."/>
            <person name="Pesole G."/>
            <person name="Petrovsky N."/>
            <person name="Piazza S."/>
            <person name="Reed J."/>
            <person name="Reid J.F."/>
            <person name="Ring B.Z."/>
            <person name="Ringwald M."/>
            <person name="Rost B."/>
            <person name="Ruan Y."/>
            <person name="Salzberg S.L."/>
            <person name="Sandelin A."/>
            <person name="Schneider C."/>
            <person name="Schoenbach C."/>
            <person name="Sekiguchi K."/>
            <person name="Semple C.A."/>
            <person name="Seno S."/>
            <person name="Sessa L."/>
            <person name="Sheng Y."/>
            <person name="Shibata Y."/>
            <person name="Shimada H."/>
            <person name="Shimada K."/>
            <person name="Silva D."/>
            <person name="Sinclair B."/>
            <person name="Sperling S."/>
            <person name="Stupka E."/>
            <person name="Sugiura K."/>
            <person name="Sultana R."/>
            <person name="Takenaka Y."/>
            <person name="Taki K."/>
            <person name="Tammoja K."/>
            <person name="Tan S.L."/>
            <person name="Tang S."/>
            <person name="Taylor M.S."/>
            <person name="Tegner J."/>
            <person name="Teichmann S.A."/>
            <person name="Ueda H.R."/>
            <person name="van Nimwegen E."/>
            <person name="Verardo R."/>
            <person name="Wei C.L."/>
            <person name="Yagi K."/>
            <person name="Yamanishi H."/>
            <person name="Zabarovsky E."/>
            <person name="Zhu S."/>
            <person name="Zimmer A."/>
            <person name="Hide W."/>
            <person name="Bult C."/>
            <person name="Grimmond S.M."/>
            <person name="Teasdale R.D."/>
            <person name="Liu E.T."/>
            <person name="Brusic V."/>
            <person name="Quackenbush J."/>
            <person name="Wahlestedt C."/>
            <person name="Mattick J.S."/>
            <person name="Hume D.A."/>
            <person name="Kai C."/>
            <person name="Sasaki D."/>
            <person name="Tomaru Y."/>
            <person name="Fukuda S."/>
            <person name="Kanamori-Katayama M."/>
            <person name="Suzuki M."/>
            <person name="Aoki J."/>
            <person name="Arakawa T."/>
            <person name="Iida J."/>
            <person name="Imamura K."/>
            <person name="Itoh M."/>
            <person name="Kato T."/>
            <person name="Kawaji H."/>
            <person name="Kawagashira N."/>
            <person name="Kawashima T."/>
            <person name="Kojima M."/>
            <person name="Kondo S."/>
            <person name="Konno H."/>
            <person name="Nakano K."/>
            <person name="Ninomiya N."/>
            <person name="Nishio T."/>
            <person name="Okada M."/>
            <person name="Plessy C."/>
            <person name="Shibata K."/>
            <person name="Shiraki T."/>
            <person name="Suzuki S."/>
            <person name="Tagami M."/>
            <person name="Waki K."/>
            <person name="Watahiki A."/>
            <person name="Okamura-Oho Y."/>
            <person name="Suzuki H."/>
            <person name="Kawai J."/>
            <person name="Hayashizaki Y."/>
        </authorList>
    </citation>
    <scope>NUCLEOTIDE SEQUENCE [LARGE SCALE MRNA]</scope>
    <source>
        <strain>C57BL/6J</strain>
        <tissue>Tongue</tissue>
    </source>
</reference>
<reference key="2">
    <citation type="journal article" date="2004" name="Genome Res.">
        <title>The status, quality, and expansion of the NIH full-length cDNA project: the Mammalian Gene Collection (MGC).</title>
        <authorList>
            <consortium name="The MGC Project Team"/>
        </authorList>
    </citation>
    <scope>NUCLEOTIDE SEQUENCE [LARGE SCALE MRNA]</scope>
    <source>
        <strain>FVB/N</strain>
        <strain>FVB/N-3</strain>
        <tissue>Colon</tissue>
        <tissue>Mammary tumor</tissue>
    </source>
</reference>
<reference key="3">
    <citation type="journal article" date="2017" name="J. Mol. Neurosci.">
        <title>The Novel Membrane-Bound Proteins MFSD1 and MFSD3 are Putative SLC Transporters Affected by Altered Nutrient Intake.</title>
        <authorList>
            <person name="Perland E."/>
            <person name="Hellsten S.V."/>
            <person name="Lekholm E."/>
            <person name="Eriksson M.M."/>
            <person name="Arapi V."/>
            <person name="Fredriksson R."/>
        </authorList>
    </citation>
    <scope>TISSUE SPECIFICITY</scope>
    <scope>INDUCTION</scope>
</reference>